<feature type="transit peptide" description="Mitochondrion" evidence="2">
    <location>
        <begin position="1"/>
        <end position="18"/>
    </location>
</feature>
<feature type="chain" id="PRO_0000399531" description="Altered inheritance of mitochondria protein 23, mitochondrial">
    <location>
        <begin position="19"/>
        <end position="406"/>
    </location>
</feature>
<feature type="region of interest" description="Disordered" evidence="3">
    <location>
        <begin position="29"/>
        <end position="79"/>
    </location>
</feature>
<feature type="region of interest" description="Disordered" evidence="3">
    <location>
        <begin position="335"/>
        <end position="406"/>
    </location>
</feature>
<feature type="compositionally biased region" description="Low complexity" evidence="3">
    <location>
        <begin position="38"/>
        <end position="54"/>
    </location>
</feature>
<feature type="compositionally biased region" description="Low complexity" evidence="3">
    <location>
        <begin position="69"/>
        <end position="79"/>
    </location>
</feature>
<feature type="compositionally biased region" description="Low complexity" evidence="3">
    <location>
        <begin position="371"/>
        <end position="385"/>
    </location>
</feature>
<sequence>MSLRIILKRDFSQCIRVFESGIKSSTTTTSNRFQAQYGNKNNDNTKRNTNNGNRFHNKYNNESRRSYPKTKYQQQYQQRKQPYIIDPRKIKFNNGTESARNAIEEIINRIYKLQKNYQIQLITNSGLKNYHLSEILQNLDLSINGLQLIDKSTSTTTTTTTTTTNNGGNELPLIKIITVREMINQYSTYLNNLKQLELIKLGSLKTLKTLDIKLKLEQKKSTTKEILIKWSINNNDFKLQKTNEIKKLIGNGNGGKNFLINMVYNKRNINKSIDTIYKYQCKGDEIEEKNLIEIELQRRQLLINNLQSLLTELNCKWIIEGDINTKMTFNVTPSISQSTTTTTTQEQEQEDYNDIEEKKLNRTERKKRKSQQQQQQQQQQQSKTNTTKKDEDEEDLDALYSFKIED</sequence>
<evidence type="ECO:0000250" key="1"/>
<evidence type="ECO:0000255" key="2"/>
<evidence type="ECO:0000256" key="3">
    <source>
        <dbReference type="SAM" id="MobiDB-lite"/>
    </source>
</evidence>
<evidence type="ECO:0000305" key="4"/>
<gene>
    <name type="primary">AIM23</name>
    <name type="ORF">CD36_85430</name>
</gene>
<reference key="1">
    <citation type="journal article" date="2009" name="Genome Res.">
        <title>Comparative genomics of the fungal pathogens Candida dubliniensis and Candida albicans.</title>
        <authorList>
            <person name="Jackson A.P."/>
            <person name="Gamble J.A."/>
            <person name="Yeomans T."/>
            <person name="Moran G.P."/>
            <person name="Saunders D."/>
            <person name="Harris D."/>
            <person name="Aslett M."/>
            <person name="Barrell J.F."/>
            <person name="Butler G."/>
            <person name="Citiulo F."/>
            <person name="Coleman D.C."/>
            <person name="de Groot P.W.J."/>
            <person name="Goodwin T.J."/>
            <person name="Quail M.A."/>
            <person name="McQuillan J."/>
            <person name="Munro C.A."/>
            <person name="Pain A."/>
            <person name="Poulter R.T."/>
            <person name="Rajandream M.A."/>
            <person name="Renauld H."/>
            <person name="Spiering M.J."/>
            <person name="Tivey A."/>
            <person name="Gow N.A.R."/>
            <person name="Barrell B."/>
            <person name="Sullivan D.J."/>
            <person name="Berriman M."/>
        </authorList>
    </citation>
    <scope>NUCLEOTIDE SEQUENCE [LARGE SCALE GENOMIC DNA]</scope>
    <source>
        <strain>CD36 / ATCC MYA-646 / CBS 7987 / NCPF 3949 / NRRL Y-17841</strain>
    </source>
</reference>
<protein>
    <recommendedName>
        <fullName>Altered inheritance of mitochondria protein 23, mitochondrial</fullName>
    </recommendedName>
</protein>
<comment type="subcellular location">
    <subcellularLocation>
        <location evidence="1">Mitochondrion</location>
    </subcellularLocation>
</comment>
<comment type="similarity">
    <text evidence="4">Belongs to the AIM23 family.</text>
</comment>
<proteinExistence type="inferred from homology"/>
<dbReference type="EMBL" id="FM992690">
    <property type="protein sequence ID" value="CAX43042.1"/>
    <property type="molecule type" value="Genomic_DNA"/>
</dbReference>
<dbReference type="RefSeq" id="XP_002419448.1">
    <property type="nucleotide sequence ID" value="XM_002419403.1"/>
</dbReference>
<dbReference type="GeneID" id="8047103"/>
<dbReference type="KEGG" id="cdu:CD36_85430"/>
<dbReference type="CGD" id="CAL0000164120">
    <property type="gene designation" value="Cd36_85430"/>
</dbReference>
<dbReference type="VEuPathDB" id="FungiDB:CD36_85430"/>
<dbReference type="eggNOG" id="ENOG502RY27">
    <property type="taxonomic scope" value="Eukaryota"/>
</dbReference>
<dbReference type="HOGENOM" id="CLU_054408_0_0_1"/>
<dbReference type="OrthoDB" id="3996489at2759"/>
<dbReference type="Proteomes" id="UP000002605">
    <property type="component" value="Chromosome 3"/>
</dbReference>
<dbReference type="GO" id="GO:0005739">
    <property type="term" value="C:mitochondrion"/>
    <property type="evidence" value="ECO:0007669"/>
    <property type="project" value="UniProtKB-SubCell"/>
</dbReference>
<dbReference type="InterPro" id="IPR029427">
    <property type="entry name" value="AIM23"/>
</dbReference>
<dbReference type="Pfam" id="PF14877">
    <property type="entry name" value="mIF3"/>
    <property type="match status" value="1"/>
</dbReference>
<name>AIM23_CANDC</name>
<organism>
    <name type="scientific">Candida dubliniensis (strain CD36 / ATCC MYA-646 / CBS 7987 / NCPF 3949 / NRRL Y-17841)</name>
    <name type="common">Yeast</name>
    <dbReference type="NCBI Taxonomy" id="573826"/>
    <lineage>
        <taxon>Eukaryota</taxon>
        <taxon>Fungi</taxon>
        <taxon>Dikarya</taxon>
        <taxon>Ascomycota</taxon>
        <taxon>Saccharomycotina</taxon>
        <taxon>Pichiomycetes</taxon>
        <taxon>Debaryomycetaceae</taxon>
        <taxon>Candida/Lodderomyces clade</taxon>
        <taxon>Candida</taxon>
    </lineage>
</organism>
<keyword id="KW-0496">Mitochondrion</keyword>
<keyword id="KW-0809">Transit peptide</keyword>
<accession>B9WED1</accession>